<name>RRF_ACIAD</name>
<accession>Q6FCH2</accession>
<protein>
    <recommendedName>
        <fullName evidence="1">Ribosome-recycling factor</fullName>
        <shortName evidence="1">RRF</shortName>
    </recommendedName>
    <alternativeName>
        <fullName evidence="1">Ribosome-releasing factor</fullName>
    </alternativeName>
</protein>
<comment type="function">
    <text evidence="1">Responsible for the release of ribosomes from messenger RNA at the termination of protein biosynthesis. May increase the efficiency of translation by recycling ribosomes from one round of translation to another.</text>
</comment>
<comment type="subcellular location">
    <subcellularLocation>
        <location evidence="1">Cytoplasm</location>
    </subcellularLocation>
</comment>
<comment type="similarity">
    <text evidence="1">Belongs to the RRF family.</text>
</comment>
<evidence type="ECO:0000255" key="1">
    <source>
        <dbReference type="HAMAP-Rule" id="MF_00040"/>
    </source>
</evidence>
<dbReference type="EMBL" id="CR543861">
    <property type="protein sequence ID" value="CAG68239.1"/>
    <property type="molecule type" value="Genomic_DNA"/>
</dbReference>
<dbReference type="RefSeq" id="WP_004925669.1">
    <property type="nucleotide sequence ID" value="NC_005966.1"/>
</dbReference>
<dbReference type="SMR" id="Q6FCH2"/>
<dbReference type="STRING" id="202950.GCA_001485005_01130"/>
<dbReference type="GeneID" id="45233788"/>
<dbReference type="KEGG" id="aci:ACIAD1373"/>
<dbReference type="eggNOG" id="COG0233">
    <property type="taxonomic scope" value="Bacteria"/>
</dbReference>
<dbReference type="HOGENOM" id="CLU_073981_2_1_6"/>
<dbReference type="OrthoDB" id="9804006at2"/>
<dbReference type="BioCyc" id="ASP62977:ACIAD_RS06330-MONOMER"/>
<dbReference type="Proteomes" id="UP000000430">
    <property type="component" value="Chromosome"/>
</dbReference>
<dbReference type="GO" id="GO:0005829">
    <property type="term" value="C:cytosol"/>
    <property type="evidence" value="ECO:0007669"/>
    <property type="project" value="GOC"/>
</dbReference>
<dbReference type="GO" id="GO:0043023">
    <property type="term" value="F:ribosomal large subunit binding"/>
    <property type="evidence" value="ECO:0007669"/>
    <property type="project" value="TreeGrafter"/>
</dbReference>
<dbReference type="GO" id="GO:0002184">
    <property type="term" value="P:cytoplasmic translational termination"/>
    <property type="evidence" value="ECO:0007669"/>
    <property type="project" value="TreeGrafter"/>
</dbReference>
<dbReference type="CDD" id="cd00520">
    <property type="entry name" value="RRF"/>
    <property type="match status" value="1"/>
</dbReference>
<dbReference type="FunFam" id="1.10.132.20:FF:000001">
    <property type="entry name" value="Ribosome-recycling factor"/>
    <property type="match status" value="1"/>
</dbReference>
<dbReference type="FunFam" id="3.30.1360.40:FF:000001">
    <property type="entry name" value="Ribosome-recycling factor"/>
    <property type="match status" value="1"/>
</dbReference>
<dbReference type="Gene3D" id="3.30.1360.40">
    <property type="match status" value="1"/>
</dbReference>
<dbReference type="Gene3D" id="1.10.132.20">
    <property type="entry name" value="Ribosome-recycling factor"/>
    <property type="match status" value="1"/>
</dbReference>
<dbReference type="HAMAP" id="MF_00040">
    <property type="entry name" value="RRF"/>
    <property type="match status" value="1"/>
</dbReference>
<dbReference type="InterPro" id="IPR002661">
    <property type="entry name" value="Ribosome_recyc_fac"/>
</dbReference>
<dbReference type="InterPro" id="IPR023584">
    <property type="entry name" value="Ribosome_recyc_fac_dom"/>
</dbReference>
<dbReference type="InterPro" id="IPR036191">
    <property type="entry name" value="RRF_sf"/>
</dbReference>
<dbReference type="NCBIfam" id="TIGR00496">
    <property type="entry name" value="frr"/>
    <property type="match status" value="1"/>
</dbReference>
<dbReference type="PANTHER" id="PTHR20982:SF3">
    <property type="entry name" value="MITOCHONDRIAL RIBOSOME RECYCLING FACTOR PSEUDO 1"/>
    <property type="match status" value="1"/>
</dbReference>
<dbReference type="PANTHER" id="PTHR20982">
    <property type="entry name" value="RIBOSOME RECYCLING FACTOR"/>
    <property type="match status" value="1"/>
</dbReference>
<dbReference type="Pfam" id="PF01765">
    <property type="entry name" value="RRF"/>
    <property type="match status" value="1"/>
</dbReference>
<dbReference type="SUPFAM" id="SSF55194">
    <property type="entry name" value="Ribosome recycling factor, RRF"/>
    <property type="match status" value="1"/>
</dbReference>
<keyword id="KW-0963">Cytoplasm</keyword>
<keyword id="KW-0648">Protein biosynthesis</keyword>
<reference key="1">
    <citation type="journal article" date="2004" name="Nucleic Acids Res.">
        <title>Unique features revealed by the genome sequence of Acinetobacter sp. ADP1, a versatile and naturally transformation competent bacterium.</title>
        <authorList>
            <person name="Barbe V."/>
            <person name="Vallenet D."/>
            <person name="Fonknechten N."/>
            <person name="Kreimeyer A."/>
            <person name="Oztas S."/>
            <person name="Labarre L."/>
            <person name="Cruveiller S."/>
            <person name="Robert C."/>
            <person name="Duprat S."/>
            <person name="Wincker P."/>
            <person name="Ornston L.N."/>
            <person name="Weissenbach J."/>
            <person name="Marliere P."/>
            <person name="Cohen G.N."/>
            <person name="Medigue C."/>
        </authorList>
    </citation>
    <scope>NUCLEOTIDE SEQUENCE [LARGE SCALE GENOMIC DNA]</scope>
    <source>
        <strain>ATCC 33305 / BD413 / ADP1</strain>
    </source>
</reference>
<proteinExistence type="inferred from homology"/>
<sequence>MINDLKKDSEQRMQKTLESLEQGFAKVRTGRAHPSILNGVMVPYYGSDVPLNQVANVGIEDSRTLVVQPFERTMVSAIDKAIRESDLGLNPITADSIRVPLPALTEETRRDMQKVARSEAENAKVAIRNIRRDVLGDLKSLLKDKEISEDDERRAGDDIQKITDKYVAEVDKRLAAKEAELMKV</sequence>
<feature type="chain" id="PRO_0000167397" description="Ribosome-recycling factor">
    <location>
        <begin position="1"/>
        <end position="184"/>
    </location>
</feature>
<organism>
    <name type="scientific">Acinetobacter baylyi (strain ATCC 33305 / BD413 / ADP1)</name>
    <dbReference type="NCBI Taxonomy" id="62977"/>
    <lineage>
        <taxon>Bacteria</taxon>
        <taxon>Pseudomonadati</taxon>
        <taxon>Pseudomonadota</taxon>
        <taxon>Gammaproteobacteria</taxon>
        <taxon>Moraxellales</taxon>
        <taxon>Moraxellaceae</taxon>
        <taxon>Acinetobacter</taxon>
    </lineage>
</organism>
<gene>
    <name evidence="1" type="primary">frr</name>
    <name type="ordered locus">ACIAD1373</name>
</gene>